<sequence length="365" mass="39688">MTVPENAQHTAPDQTQHTAPDRTRQAQQAAPDTAGRRLIELMAGFWKTQAIYLAAESGLVDAIAAAGRAPAVELANRTGTDPDALGRLLLFLESLDVVSGEDPAGYALTPVGELLRTGTQDSMRDHVRIYGSHFYRAWGALDHSLRTGRSAFTEVYGSDLFRYLNQHPDLSLTYERAMVAGTPFFAQVPEVHDFSGARLIVDVAGGHGALLHEILKSCPEPRAVLFDAPHVIAETADRPIASEHGDRVTLVPGDFFEGVPQGGDVYLLSRILHCFDDEACLRILAHCRSAMAPGGRLVVVERLLTRGTGSSLAQGYNMHMLVVLGGGRERDEDAYRTLLEKAGFQLDSVTTLPLETHLMAATLRR</sequence>
<name>CREN_STRCM</name>
<feature type="chain" id="PRO_0000457476" description="3-amino-4-hydroxybenzoate 4-O-methyltransferase">
    <location>
        <begin position="1"/>
        <end position="365"/>
    </location>
</feature>
<feature type="region of interest" description="Disordered" evidence="2">
    <location>
        <begin position="1"/>
        <end position="32"/>
    </location>
</feature>
<feature type="compositionally biased region" description="Polar residues" evidence="2">
    <location>
        <begin position="1"/>
        <end position="18"/>
    </location>
</feature>
<feature type="active site" description="Proton acceptor" evidence="1">
    <location>
        <position position="273"/>
    </location>
</feature>
<feature type="binding site" evidence="1">
    <location>
        <position position="227"/>
    </location>
    <ligand>
        <name>S-adenosyl-L-methionine</name>
        <dbReference type="ChEBI" id="CHEBI:59789"/>
    </ligand>
</feature>
<feature type="binding site" evidence="1">
    <location>
        <begin position="253"/>
        <end position="255"/>
    </location>
    <ligand>
        <name>S-adenosyl-L-methionine</name>
        <dbReference type="ChEBI" id="CHEBI:59789"/>
    </ligand>
</feature>
<feature type="binding site" evidence="1">
    <location>
        <position position="270"/>
    </location>
    <ligand>
        <name>S-adenosyl-L-methionine</name>
        <dbReference type="ChEBI" id="CHEBI:59789"/>
    </ligand>
</feature>
<evidence type="ECO:0000255" key="1">
    <source>
        <dbReference type="PROSITE-ProRule" id="PRU01020"/>
    </source>
</evidence>
<evidence type="ECO:0000256" key="2">
    <source>
        <dbReference type="SAM" id="MobiDB-lite"/>
    </source>
</evidence>
<evidence type="ECO:0000269" key="3">
    <source>
    </source>
</evidence>
<evidence type="ECO:0000269" key="4">
    <source>
    </source>
</evidence>
<evidence type="ECO:0000303" key="5">
    <source>
    </source>
</evidence>
<evidence type="ECO:0000305" key="6"/>
<evidence type="ECO:0000305" key="7">
    <source>
    </source>
</evidence>
<evidence type="ECO:0000305" key="8">
    <source>
    </source>
</evidence>
<organism>
    <name type="scientific">Streptomyces cremeus</name>
    <dbReference type="NCBI Taxonomy" id="66881"/>
    <lineage>
        <taxon>Bacteria</taxon>
        <taxon>Bacillati</taxon>
        <taxon>Actinomycetota</taxon>
        <taxon>Actinomycetes</taxon>
        <taxon>Kitasatosporales</taxon>
        <taxon>Streptomycetaceae</taxon>
        <taxon>Streptomyces</taxon>
    </lineage>
</organism>
<gene>
    <name evidence="5" type="primary">creN</name>
</gene>
<dbReference type="EC" id="2.1.1.380" evidence="3"/>
<dbReference type="EMBL" id="KT381192">
    <property type="protein sequence ID" value="ALA99211.1"/>
    <property type="molecule type" value="Genomic_DNA"/>
</dbReference>
<dbReference type="EMBL" id="LC033425">
    <property type="protein sequence ID" value="BAU09311.1"/>
    <property type="molecule type" value="Genomic_DNA"/>
</dbReference>
<dbReference type="RefSeq" id="WP_345228827.1">
    <property type="nucleotide sequence ID" value="NZ_BAAAXE010000015.1"/>
</dbReference>
<dbReference type="SMR" id="A0A0K2JL91"/>
<dbReference type="KEGG" id="ag:ALA99211"/>
<dbReference type="BioCyc" id="MetaCyc:MONOMER-21760"/>
<dbReference type="GO" id="GO:0008171">
    <property type="term" value="F:O-methyltransferase activity"/>
    <property type="evidence" value="ECO:0007669"/>
    <property type="project" value="InterPro"/>
</dbReference>
<dbReference type="GO" id="GO:0046983">
    <property type="term" value="F:protein dimerization activity"/>
    <property type="evidence" value="ECO:0007669"/>
    <property type="project" value="InterPro"/>
</dbReference>
<dbReference type="GO" id="GO:0017000">
    <property type="term" value="P:antibiotic biosynthetic process"/>
    <property type="evidence" value="ECO:0007669"/>
    <property type="project" value="UniProtKB-KW"/>
</dbReference>
<dbReference type="GO" id="GO:0032259">
    <property type="term" value="P:methylation"/>
    <property type="evidence" value="ECO:0007669"/>
    <property type="project" value="UniProtKB-KW"/>
</dbReference>
<dbReference type="CDD" id="cd02440">
    <property type="entry name" value="AdoMet_MTases"/>
    <property type="match status" value="1"/>
</dbReference>
<dbReference type="Gene3D" id="1.10.287.1350">
    <property type="match status" value="1"/>
</dbReference>
<dbReference type="Gene3D" id="3.40.50.150">
    <property type="entry name" value="Vaccinia Virus protein VP39"/>
    <property type="match status" value="1"/>
</dbReference>
<dbReference type="Gene3D" id="1.10.10.10">
    <property type="entry name" value="Winged helix-like DNA-binding domain superfamily/Winged helix DNA-binding domain"/>
    <property type="match status" value="1"/>
</dbReference>
<dbReference type="InterPro" id="IPR016461">
    <property type="entry name" value="COMT-like"/>
</dbReference>
<dbReference type="InterPro" id="IPR001077">
    <property type="entry name" value="O_MeTrfase_dom"/>
</dbReference>
<dbReference type="InterPro" id="IPR012967">
    <property type="entry name" value="Plant_O-MeTrfase_dimerisation"/>
</dbReference>
<dbReference type="InterPro" id="IPR029063">
    <property type="entry name" value="SAM-dependent_MTases_sf"/>
</dbReference>
<dbReference type="InterPro" id="IPR036388">
    <property type="entry name" value="WH-like_DNA-bd_sf"/>
</dbReference>
<dbReference type="InterPro" id="IPR036390">
    <property type="entry name" value="WH_DNA-bd_sf"/>
</dbReference>
<dbReference type="PANTHER" id="PTHR43712:SF2">
    <property type="entry name" value="O-METHYLTRANSFERASE CICE"/>
    <property type="match status" value="1"/>
</dbReference>
<dbReference type="PANTHER" id="PTHR43712">
    <property type="entry name" value="PUTATIVE (AFU_ORTHOLOGUE AFUA_4G14580)-RELATED"/>
    <property type="match status" value="1"/>
</dbReference>
<dbReference type="Pfam" id="PF08100">
    <property type="entry name" value="Dimerisation"/>
    <property type="match status" value="1"/>
</dbReference>
<dbReference type="Pfam" id="PF00891">
    <property type="entry name" value="Methyltransf_2"/>
    <property type="match status" value="1"/>
</dbReference>
<dbReference type="PIRSF" id="PIRSF005739">
    <property type="entry name" value="O-mtase"/>
    <property type="match status" value="1"/>
</dbReference>
<dbReference type="SUPFAM" id="SSF53335">
    <property type="entry name" value="S-adenosyl-L-methionine-dependent methyltransferases"/>
    <property type="match status" value="1"/>
</dbReference>
<dbReference type="SUPFAM" id="SSF46785">
    <property type="entry name" value="Winged helix' DNA-binding domain"/>
    <property type="match status" value="1"/>
</dbReference>
<dbReference type="PROSITE" id="PS51683">
    <property type="entry name" value="SAM_OMT_II"/>
    <property type="match status" value="1"/>
</dbReference>
<keyword id="KW-0045">Antibiotic biosynthesis</keyword>
<keyword id="KW-0489">Methyltransferase</keyword>
<keyword id="KW-0949">S-adenosyl-L-methionine</keyword>
<keyword id="KW-0808">Transferase</keyword>
<comment type="function">
    <text evidence="3 4">Part of a gene cluster involved in the biosynthesis of cremeomycin, a light-sensitive o-diazoquinone with antibacterial and antiproliferative effects (PubMed:26278892, PubMed:26689788). Catalyzes the methylation of the C4 hydroxyl group of 3-amino-2,4-dihydroxybenzoate (3,2,4-ADHBA) to form 3-amino-2-hydroxy-4-methoxybenzoate (3,2,4-AHMBA) (PubMed:26278892). In vitro, can also catalyze the methylation of 3-amino-4-hydroxybenzoate (3,4-AHBA) (PubMed:26278892, PubMed:26689788).</text>
</comment>
<comment type="catalytic activity">
    <reaction evidence="3">
        <text>3-amino-2,4-dihydroxybenzoate + S-adenosyl-L-methionine = 3-amino-2-hydroxy-4-methoxybenzoate + S-adenosyl-L-homocysteine + H(+)</text>
        <dbReference type="Rhea" id="RHEA:69000"/>
        <dbReference type="ChEBI" id="CHEBI:15378"/>
        <dbReference type="ChEBI" id="CHEBI:57856"/>
        <dbReference type="ChEBI" id="CHEBI:59789"/>
        <dbReference type="ChEBI" id="CHEBI:180657"/>
        <dbReference type="ChEBI" id="CHEBI:180662"/>
        <dbReference type="EC" id="2.1.1.380"/>
    </reaction>
    <physiologicalReaction direction="left-to-right" evidence="3">
        <dbReference type="Rhea" id="RHEA:69001"/>
    </physiologicalReaction>
</comment>
<comment type="pathway">
    <text evidence="7 8">Antibiotic biosynthesis.</text>
</comment>
<comment type="similarity">
    <text evidence="1">Belongs to the class I-like SAM-binding methyltransferase superfamily. Cation-independent O-methyltransferase family.</text>
</comment>
<proteinExistence type="evidence at protein level"/>
<accession>A0A0K2JL91</accession>
<reference key="1">
    <citation type="journal article" date="2015" name="ChemBioChem">
        <title>The cremeomycin biosynthetic gene cluster encodes a pathway for diazo formation.</title>
        <authorList>
            <person name="Waldman A.J."/>
            <person name="Pechersky Y."/>
            <person name="Wang P."/>
            <person name="Wang J.X."/>
            <person name="Balskus E.P."/>
        </authorList>
    </citation>
    <scope>NUCLEOTIDE SEQUENCE [GENOMIC DNA]</scope>
    <scope>FUNCTION</scope>
    <scope>CATALYTIC ACTIVITY</scope>
    <source>
        <strain>ATCC 19744 / DSM 40147 / JCM 4362 / NBRC 12760 / NRRL 3241 / INA 815/54</strain>
    </source>
</reference>
<reference key="2">
    <citation type="journal article" date="2016" name="Nat. Chem. Biol.">
        <title>A nitrous acid biosynthetic pathway for diazo group formation in bacteria.</title>
        <authorList>
            <person name="Sugai Y."/>
            <person name="Katsuyama Y."/>
            <person name="Ohnishi Y."/>
        </authorList>
    </citation>
    <scope>NUCLEOTIDE SEQUENCE [GENOMIC DNA]</scope>
    <scope>FUNCTION</scope>
    <source>
        <strain>ATCC 19744 / DSM 40147 / JCM 4362 / NBRC 12760 / NRRL 3241 / INA 815/54</strain>
    </source>
</reference>
<protein>
    <recommendedName>
        <fullName evidence="6">3-amino-4-hydroxybenzoate 4-O-methyltransferase</fullName>
        <ecNumber evidence="3">2.1.1.380</ecNumber>
    </recommendedName>
</protein>